<evidence type="ECO:0000250" key="1"/>
<evidence type="ECO:0000269" key="2">
    <source>
    </source>
</evidence>
<evidence type="ECO:0000305" key="3"/>
<evidence type="ECO:0000305" key="4">
    <source>
    </source>
</evidence>
<evidence type="ECO:0007744" key="5">
    <source>
        <dbReference type="PDB" id="4H0M"/>
    </source>
</evidence>
<evidence type="ECO:0007829" key="6">
    <source>
        <dbReference type="PDB" id="7D6W"/>
    </source>
</evidence>
<dbReference type="EMBL" id="M16325">
    <property type="protein sequence ID" value="AAA22051.1"/>
    <property type="molecule type" value="Genomic_DNA"/>
</dbReference>
<dbReference type="EMBL" id="M94218">
    <property type="protein sequence ID" value="AAA64532.1"/>
    <property type="molecule type" value="Genomic_DNA"/>
</dbReference>
<dbReference type="EMBL" id="CP000100">
    <property type="protein sequence ID" value="ABB57083.1"/>
    <property type="molecule type" value="Genomic_DNA"/>
</dbReference>
<dbReference type="EMBL" id="CP000100">
    <property type="protein sequence ID" value="ABB57078.1"/>
    <property type="molecule type" value="Genomic_DNA"/>
</dbReference>
<dbReference type="EMBL" id="X04916">
    <property type="protein sequence ID" value="CAA28586.1"/>
    <property type="molecule type" value="Genomic_DNA"/>
</dbReference>
<dbReference type="RefSeq" id="WP_011242807.1">
    <property type="nucleotide sequence ID" value="NZ_JACJTX010000003.1"/>
</dbReference>
<dbReference type="PDB" id="4H0M">
    <property type="method" value="X-ray"/>
    <property type="resolution" value="2.20 A"/>
    <property type="chains" value="A/C/E/G/I/K/M/O/Q/S/U/W=1-163"/>
</dbReference>
<dbReference type="PDB" id="7D6W">
    <property type="method" value="X-ray"/>
    <property type="resolution" value="2.15 A"/>
    <property type="chains" value="A/C/E/G/I/K=2-163"/>
</dbReference>
<dbReference type="PDBsum" id="4H0M"/>
<dbReference type="PDBsum" id="7D6W"/>
<dbReference type="SMR" id="P13530"/>
<dbReference type="STRING" id="1140.Synpcc7942_1048"/>
<dbReference type="PaxDb" id="1140-Synpcc7942_1048"/>
<dbReference type="GeneID" id="72429905"/>
<dbReference type="KEGG" id="syf:Synpcc7942_1048"/>
<dbReference type="KEGG" id="syf:Synpcc7942_1053"/>
<dbReference type="eggNOG" id="ENOG502Z85C">
    <property type="taxonomic scope" value="Bacteria"/>
</dbReference>
<dbReference type="HOGENOM" id="CLU_104219_2_0_3"/>
<dbReference type="OrthoDB" id="466183at2"/>
<dbReference type="BioCyc" id="MetaCyc:SYNPCC7942_1048-MONOMER"/>
<dbReference type="BioCyc" id="SYNEL:SYNPCC7942_1048-MONOMER"/>
<dbReference type="EvolutionaryTrace" id="P13530"/>
<dbReference type="Proteomes" id="UP000889800">
    <property type="component" value="Chromosome"/>
</dbReference>
<dbReference type="GO" id="GO:0030089">
    <property type="term" value="C:phycobilisome"/>
    <property type="evidence" value="ECO:0007669"/>
    <property type="project" value="UniProtKB-KW"/>
</dbReference>
<dbReference type="GO" id="GO:0031676">
    <property type="term" value="C:plasma membrane-derived thylakoid membrane"/>
    <property type="evidence" value="ECO:0007669"/>
    <property type="project" value="UniProtKB-SubCell"/>
</dbReference>
<dbReference type="GO" id="GO:0015979">
    <property type="term" value="P:photosynthesis"/>
    <property type="evidence" value="ECO:0007669"/>
    <property type="project" value="UniProtKB-KW"/>
</dbReference>
<dbReference type="Gene3D" id="1.10.490.20">
    <property type="entry name" value="Phycocyanins"/>
    <property type="match status" value="1"/>
</dbReference>
<dbReference type="InterPro" id="IPR009050">
    <property type="entry name" value="Globin-like_sf"/>
</dbReference>
<dbReference type="InterPro" id="IPR012128">
    <property type="entry name" value="Phycobilisome_asu/bsu"/>
</dbReference>
<dbReference type="InterPro" id="IPR038719">
    <property type="entry name" value="Phycobilisome_asu/bsu_sf"/>
</dbReference>
<dbReference type="InterPro" id="IPR006246">
    <property type="entry name" value="Phycocyanin_a"/>
</dbReference>
<dbReference type="NCBIfam" id="TIGR01338">
    <property type="entry name" value="phycocy_alpha"/>
    <property type="match status" value="1"/>
</dbReference>
<dbReference type="PANTHER" id="PTHR34011:SF4">
    <property type="entry name" value="C-PHYCOCYANIN ALPHA SUBUNIT"/>
    <property type="match status" value="1"/>
</dbReference>
<dbReference type="PANTHER" id="PTHR34011">
    <property type="entry name" value="PHYCOBILISOME 32.1 KDA LINKER POLYPEPTIDE, PHYCOCYANIN-ASSOCIATED, ROD 2-RELATED"/>
    <property type="match status" value="1"/>
</dbReference>
<dbReference type="Pfam" id="PF00502">
    <property type="entry name" value="Phycobilisome"/>
    <property type="match status" value="1"/>
</dbReference>
<dbReference type="PIRSF" id="PIRSF000081">
    <property type="entry name" value="Phycocyanin"/>
    <property type="match status" value="1"/>
</dbReference>
<dbReference type="SUPFAM" id="SSF46458">
    <property type="entry name" value="Globin-like"/>
    <property type="match status" value="1"/>
</dbReference>
<feature type="initiator methionine" description="Removed" evidence="4">
    <location>
        <position position="1"/>
    </location>
</feature>
<feature type="chain" id="PRO_0000199132" description="C-phycocyanin alpha subunit">
    <location>
        <begin position="2"/>
        <end position="163"/>
    </location>
</feature>
<feature type="binding site" description="covalent" evidence="2 5">
    <location>
        <position position="85"/>
    </location>
    <ligand>
        <name>(2R,3E)-phycocyanobilin</name>
        <dbReference type="ChEBI" id="CHEBI:85275"/>
    </ligand>
</feature>
<feature type="helix" evidence="6">
    <location>
        <begin position="5"/>
        <end position="16"/>
    </location>
</feature>
<feature type="helix" evidence="6">
    <location>
        <begin position="22"/>
        <end position="47"/>
    </location>
</feature>
<feature type="helix" evidence="6">
    <location>
        <begin position="49"/>
        <end position="63"/>
    </location>
</feature>
<feature type="helix" evidence="6">
    <location>
        <begin position="66"/>
        <end position="69"/>
    </location>
</feature>
<feature type="helix" evidence="6">
    <location>
        <begin position="79"/>
        <end position="102"/>
    </location>
</feature>
<feature type="helix" evidence="6">
    <location>
        <begin position="106"/>
        <end position="111"/>
    </location>
</feature>
<feature type="turn" evidence="6">
    <location>
        <begin position="112"/>
        <end position="115"/>
    </location>
</feature>
<feature type="helix" evidence="6">
    <location>
        <begin position="116"/>
        <end position="122"/>
    </location>
</feature>
<feature type="helix" evidence="6">
    <location>
        <begin position="127"/>
        <end position="140"/>
    </location>
</feature>
<feature type="helix" evidence="6">
    <location>
        <begin position="145"/>
        <end position="161"/>
    </location>
</feature>
<keyword id="KW-0002">3D-structure</keyword>
<keyword id="KW-0042">Antenna complex</keyword>
<keyword id="KW-0089">Bile pigment</keyword>
<keyword id="KW-0157">Chromophore</keyword>
<keyword id="KW-0249">Electron transport</keyword>
<keyword id="KW-0472">Membrane</keyword>
<keyword id="KW-0602">Photosynthesis</keyword>
<keyword id="KW-0605">Phycobilisome</keyword>
<keyword id="KW-1185">Reference proteome</keyword>
<keyword id="KW-0793">Thylakoid</keyword>
<keyword id="KW-0813">Transport</keyword>
<accession>P13530</accession>
<accession>Q31PD6</accession>
<accession>Q44120</accession>
<comment type="function">
    <text>Light-harvesting photosynthetic bile pigment-protein from the phycobiliprotein complex (phycobilisome, PBS). Phycocyanin is the major phycobiliprotein in the PBS rod.</text>
</comment>
<comment type="subunit">
    <text evidence="2 5">Heterodimer of an alpha and a beta subunit, which further assembles into trimers and the trimers into hexamers.</text>
</comment>
<comment type="subcellular location">
    <subcellularLocation>
        <location evidence="1">Cellular thylakoid membrane</location>
        <topology evidence="1">Peripheral membrane protein</topology>
        <orientation evidence="1">Cytoplasmic side</orientation>
    </subcellularLocation>
    <text evidence="1">Part of the phycobilisome rod.</text>
</comment>
<comment type="PTM">
    <text evidence="2">Contains one covalently linked phycocyanobilin chromophore.</text>
</comment>
<comment type="similarity">
    <text evidence="3">Belongs to the phycobiliprotein family.</text>
</comment>
<organism>
    <name type="scientific">Synechococcus elongatus (strain ATCC 33912 / PCC 7942 / FACHB-805)</name>
    <name type="common">Anacystis nidulans R2</name>
    <dbReference type="NCBI Taxonomy" id="1140"/>
    <lineage>
        <taxon>Bacteria</taxon>
        <taxon>Bacillati</taxon>
        <taxon>Cyanobacteriota</taxon>
        <taxon>Cyanophyceae</taxon>
        <taxon>Synechococcales</taxon>
        <taxon>Synechococcaceae</taxon>
        <taxon>Synechococcus</taxon>
    </lineage>
</organism>
<name>PHCA_SYNE7</name>
<protein>
    <recommendedName>
        <fullName>C-phycocyanin alpha subunit</fullName>
    </recommendedName>
</protein>
<proteinExistence type="evidence at protein level"/>
<reference key="1">
    <citation type="journal article" date="1987" name="Gene">
        <title>Phycocyanin alpha-subunit gene of Anacystis nidulans R2: cloning, nucleotide sequencing and expression in Escherichia coli.</title>
        <authorList>
            <person name="Lau R.H."/>
            <person name="Alvarado-Urbina G."/>
            <person name="Lau P.C.K."/>
        </authorList>
    </citation>
    <scope>NUCLEOTIDE SEQUENCE [GENOMIC DNA]</scope>
</reference>
<reference key="2">
    <citation type="journal article" date="1988" name="J. Bacteriol.">
        <title>Transcriptional organization of the phycocyanin subunit gene clusters of the cyanobacterium Anacystis nidulans UTEX 625.</title>
        <authorList>
            <person name="Kalla R.S."/>
            <person name="Lind L.K."/>
            <person name="Lidholm J."/>
            <person name="Gustafsson P."/>
        </authorList>
    </citation>
    <scope>NUCLEOTIDE SEQUENCE [GENOMIC DNA]</scope>
</reference>
<reference key="3">
    <citation type="submission" date="2005-08" db="EMBL/GenBank/DDBJ databases">
        <title>Complete sequence of chromosome 1 of Synechococcus elongatus PCC 7942.</title>
        <authorList>
            <consortium name="US DOE Joint Genome Institute"/>
            <person name="Copeland A."/>
            <person name="Lucas S."/>
            <person name="Lapidus A."/>
            <person name="Barry K."/>
            <person name="Detter J.C."/>
            <person name="Glavina T."/>
            <person name="Hammon N."/>
            <person name="Israni S."/>
            <person name="Pitluck S."/>
            <person name="Schmutz J."/>
            <person name="Larimer F."/>
            <person name="Land M."/>
            <person name="Kyrpides N."/>
            <person name="Lykidis A."/>
            <person name="Golden S."/>
            <person name="Richardson P."/>
        </authorList>
    </citation>
    <scope>NUCLEOTIDE SEQUENCE [LARGE SCALE GENOMIC DNA]</scope>
    <source>
        <strain>ATCC 33912 / PCC 7942 / FACHB-805</strain>
    </source>
</reference>
<reference key="4">
    <citation type="journal article" date="1987" name="Nucleic Acids Res.">
        <title>Nucleotide sequence of phycocyanin beta-subunit gene of cyanobacterium Anacystis nidulans strain R2.</title>
        <authorList>
            <person name="Lau P.C.K."/>
            <person name="Condie A."/>
            <person name="Alvarado-Urbina G."/>
            <person name="Lau R.H."/>
        </authorList>
    </citation>
    <scope>NUCLEOTIDE SEQUENCE [GENOMIC DNA] OF 1-12</scope>
</reference>
<reference evidence="5" key="5">
    <citation type="journal article" date="2013" name="Biochim. Biophys. Acta">
        <title>Allophycocyanin and phycocyanin crystal structures reveal facets of phycobilisome assembly.</title>
        <authorList>
            <person name="Marx A."/>
            <person name="Adir N."/>
        </authorList>
    </citation>
    <scope>X-RAY CRYSTALLOGRAPHY (2.20 ANGSTROMS) IN COMPLEX WITH PHYCOCYANOBILIN CHROMOPHORE</scope>
    <scope>PROBABLE REMOVAL OF N-TERMINAL METHIONINE</scope>
    <scope>SUBUNIT</scope>
    <source>
        <strain>ATCC 33912 / PCC 7942 / FACHB-805</strain>
    </source>
</reference>
<gene>
    <name type="primary">cpcA1</name>
    <name type="synonym">cpcA</name>
    <name type="ordered locus">Synpcc7942_1048</name>
</gene>
<gene>
    <name type="primary">cpcA2</name>
    <name type="ordered locus">Synpcc7942_1053</name>
</gene>
<sequence length="163" mass="17288">MSKTPLTEAVAAADSQGRFLSSTELQVAFGRFRQAASGLAAAKALANNADSLVNGAANAVYSKFPYTTSTPGNNFASTPEGKAKCARDIGYYLRIVTYALVAGGTGPIDEYLLAGLDEINKTFDLAPSWYVEALKYIKANHGLSGDSRDEANSYIDYLINALS</sequence>